<feature type="peptide" id="PRO_0000421600" description="Pyrokinin-3" evidence="3">
    <location>
        <begin position="1"/>
        <end position="8"/>
    </location>
</feature>
<feature type="modified residue" description="Methionine amide" evidence="3">
    <location>
        <position position="8"/>
    </location>
</feature>
<dbReference type="GO" id="GO:0005576">
    <property type="term" value="C:extracellular region"/>
    <property type="evidence" value="ECO:0007669"/>
    <property type="project" value="UniProtKB-SubCell"/>
</dbReference>
<dbReference type="GO" id="GO:0007218">
    <property type="term" value="P:neuropeptide signaling pathway"/>
    <property type="evidence" value="ECO:0007669"/>
    <property type="project" value="UniProtKB-KW"/>
</dbReference>
<organism>
    <name type="scientific">Tyrannophasma gladiator</name>
    <name type="common">Gladiator</name>
    <name type="synonym">Heel-walker</name>
    <dbReference type="NCBI Taxonomy" id="270861"/>
    <lineage>
        <taxon>Eukaryota</taxon>
        <taxon>Metazoa</taxon>
        <taxon>Ecdysozoa</taxon>
        <taxon>Arthropoda</taxon>
        <taxon>Hexapoda</taxon>
        <taxon>Insecta</taxon>
        <taxon>Pterygota</taxon>
        <taxon>Neoptera</taxon>
        <taxon>Polyneoptera</taxon>
        <taxon>Mantophasmatodea</taxon>
        <taxon>Mantophasmatodea incertae sedis</taxon>
        <taxon>Tyrannophasma</taxon>
    </lineage>
</organism>
<protein>
    <recommendedName>
        <fullName evidence="4">Pyrokinin-3</fullName>
        <shortName evidence="4">PK-3</shortName>
    </recommendedName>
</protein>
<sequence>DPPFAPRM</sequence>
<accession>B3A0I8</accession>
<evidence type="ECO:0000250" key="1">
    <source>
        <dbReference type="UniProtKB" id="P82619"/>
    </source>
</evidence>
<evidence type="ECO:0000255" key="2"/>
<evidence type="ECO:0000269" key="3">
    <source>
    </source>
</evidence>
<evidence type="ECO:0000303" key="4">
    <source>
    </source>
</evidence>
<evidence type="ECO:0000305" key="5"/>
<evidence type="ECO:0000305" key="6">
    <source>
    </source>
</evidence>
<name>PPK3_TYRGL</name>
<proteinExistence type="evidence at protein level"/>
<keyword id="KW-0027">Amidation</keyword>
<keyword id="KW-0903">Direct protein sequencing</keyword>
<keyword id="KW-0527">Neuropeptide</keyword>
<keyword id="KW-0964">Secreted</keyword>
<comment type="function">
    <text evidence="1">Myoactive.</text>
</comment>
<comment type="subcellular location">
    <subcellularLocation>
        <location evidence="6">Secreted</location>
    </subcellularLocation>
</comment>
<comment type="similarity">
    <text evidence="2">Belongs to the pyrokinin family.</text>
</comment>
<reference evidence="5" key="1">
    <citation type="journal article" date="2012" name="Syst. Biol.">
        <title>Peptidomics-based phylogeny and biogeography of Mantophasmatodea (Hexapoda).</title>
        <authorList>
            <person name="Predel R."/>
            <person name="Neupert S."/>
            <person name="Huetteroth W."/>
            <person name="Kahnt J."/>
            <person name="Waidelich D."/>
            <person name="Roth S."/>
        </authorList>
    </citation>
    <scope>PROTEIN SEQUENCE</scope>
    <scope>AMIDATION AT MET-8</scope>
    <source>
        <tissue evidence="3">Corpora cardiaca</tissue>
    </source>
</reference>